<reference key="1">
    <citation type="journal article" date="1997" name="Proc. Natl. Acad. Sci. U.S.A.">
        <title>Characterization of the CHD family of proteins.</title>
        <authorList>
            <person name="Woodage T."/>
            <person name="Basrai M.A."/>
            <person name="Baxevanis A.D."/>
            <person name="Hieter P."/>
            <person name="Collins F.S."/>
        </authorList>
    </citation>
    <scope>NUCLEOTIDE SEQUENCE [MRNA] (ISOFORM 2)</scope>
</reference>
<reference key="2">
    <citation type="journal article" date="2004" name="Nature">
        <title>The DNA sequence and comparative analysis of human chromosome 5.</title>
        <authorList>
            <person name="Schmutz J."/>
            <person name="Martin J."/>
            <person name="Terry A."/>
            <person name="Couronne O."/>
            <person name="Grimwood J."/>
            <person name="Lowry S."/>
            <person name="Gordon L.A."/>
            <person name="Scott D."/>
            <person name="Xie G."/>
            <person name="Huang W."/>
            <person name="Hellsten U."/>
            <person name="Tran-Gyamfi M."/>
            <person name="She X."/>
            <person name="Prabhakar S."/>
            <person name="Aerts A."/>
            <person name="Altherr M."/>
            <person name="Bajorek E."/>
            <person name="Black S."/>
            <person name="Branscomb E."/>
            <person name="Caoile C."/>
            <person name="Challacombe J.F."/>
            <person name="Chan Y.M."/>
            <person name="Denys M."/>
            <person name="Detter J.C."/>
            <person name="Escobar J."/>
            <person name="Flowers D."/>
            <person name="Fotopulos D."/>
            <person name="Glavina T."/>
            <person name="Gomez M."/>
            <person name="Gonzales E."/>
            <person name="Goodstein D."/>
            <person name="Grigoriev I."/>
            <person name="Groza M."/>
            <person name="Hammon N."/>
            <person name="Hawkins T."/>
            <person name="Haydu L."/>
            <person name="Israni S."/>
            <person name="Jett J."/>
            <person name="Kadner K."/>
            <person name="Kimball H."/>
            <person name="Kobayashi A."/>
            <person name="Lopez F."/>
            <person name="Lou Y."/>
            <person name="Martinez D."/>
            <person name="Medina C."/>
            <person name="Morgan J."/>
            <person name="Nandkeshwar R."/>
            <person name="Noonan J.P."/>
            <person name="Pitluck S."/>
            <person name="Pollard M."/>
            <person name="Predki P."/>
            <person name="Priest J."/>
            <person name="Ramirez L."/>
            <person name="Retterer J."/>
            <person name="Rodriguez A."/>
            <person name="Rogers S."/>
            <person name="Salamov A."/>
            <person name="Salazar A."/>
            <person name="Thayer N."/>
            <person name="Tice H."/>
            <person name="Tsai M."/>
            <person name="Ustaszewska A."/>
            <person name="Vo N."/>
            <person name="Wheeler J."/>
            <person name="Wu K."/>
            <person name="Yang J."/>
            <person name="Dickson M."/>
            <person name="Cheng J.-F."/>
            <person name="Eichler E.E."/>
            <person name="Olsen A."/>
            <person name="Pennacchio L.A."/>
            <person name="Rokhsar D.S."/>
            <person name="Richardson P."/>
            <person name="Lucas S.M."/>
            <person name="Myers R.M."/>
            <person name="Rubin E.M."/>
        </authorList>
    </citation>
    <scope>NUCLEOTIDE SEQUENCE [LARGE SCALE GENOMIC DNA]</scope>
</reference>
<reference key="3">
    <citation type="journal article" date="2004" name="Genome Res.">
        <title>The status, quality, and expansion of the NIH full-length cDNA project: the Mammalian Gene Collection (MGC).</title>
        <authorList>
            <consortium name="The MGC Project Team"/>
        </authorList>
    </citation>
    <scope>NUCLEOTIDE SEQUENCE [LARGE SCALE MRNA] (ISOFORM 2)</scope>
    <source>
        <tissue>Cerebellum</tissue>
    </source>
</reference>
<reference key="4">
    <citation type="journal article" date="2005" name="J. Biol. Chem.">
        <title>Human but not yeast CHD1 binds directly and selectively to histone H3 methylated at lysine 4 via its tandem chromodomains.</title>
        <authorList>
            <person name="Sims R.J. III"/>
            <person name="Chen C.-F."/>
            <person name="Santos-Rosa H."/>
            <person name="Kouzarides T."/>
            <person name="Patel S.S."/>
            <person name="Reinberg D."/>
        </authorList>
    </citation>
    <scope>INTERACTION WITH H3K4ME2 AND H3K4ME3</scope>
</reference>
<reference key="5">
    <citation type="journal article" date="2006" name="Cell">
        <title>Global, in vivo, and site-specific phosphorylation dynamics in signaling networks.</title>
        <authorList>
            <person name="Olsen J.V."/>
            <person name="Blagoev B."/>
            <person name="Gnad F."/>
            <person name="Macek B."/>
            <person name="Kumar C."/>
            <person name="Mortensen P."/>
            <person name="Mann M."/>
        </authorList>
    </citation>
    <scope>IDENTIFICATION BY MASS SPECTROMETRY [LARGE SCALE ANALYSIS]</scope>
    <source>
        <tissue>Cervix carcinoma</tissue>
    </source>
</reference>
<reference key="6">
    <citation type="journal article" date="2006" name="Nat. Biotechnol.">
        <title>A probability-based approach for high-throughput protein phosphorylation analysis and site localization.</title>
        <authorList>
            <person name="Beausoleil S.A."/>
            <person name="Villen J."/>
            <person name="Gerber S.A."/>
            <person name="Rush J."/>
            <person name="Gygi S.P."/>
        </authorList>
    </citation>
    <scope>IDENTIFICATION BY MASS SPECTROMETRY [LARGE SCALE ANALYSIS]</scope>
    <source>
        <tissue>Cervix carcinoma</tissue>
    </source>
</reference>
<reference key="7">
    <citation type="journal article" date="2007" name="J. Mol. Biol.">
        <title>Molecular implications of evolutionary differences in CHD double chromodomains.</title>
        <authorList>
            <person name="Flanagan J.F."/>
            <person name="Blus B.J."/>
            <person name="Kim D."/>
            <person name="Clines K.L."/>
            <person name="Rastinejad F."/>
            <person name="Khorasanizadeh S."/>
        </authorList>
    </citation>
    <scope>DOMAIN</scope>
    <scope>INTERACTION WITH HISTONE H3K4ME3</scope>
</reference>
<reference key="8">
    <citation type="journal article" date="2007" name="Mol. Cell">
        <title>Recognition of trimethylated histone H3 lysine 4 facilitates the recruitment of transcription postinitiation factors and pre-mRNA splicing.</title>
        <authorList>
            <person name="Sims R.J. III"/>
            <person name="Millhouse S."/>
            <person name="Chen C.-F."/>
            <person name="Lewis B.A."/>
            <person name="Erdjument-Bromage H."/>
            <person name="Tempst P."/>
            <person name="Manley J.L."/>
            <person name="Reinberg D."/>
        </authorList>
    </citation>
    <scope>FUNCTION</scope>
    <scope>INTERACTION WITH H3K4ME3; PAF1; SFA3A1; SFA3A2; SFA3A3; SNF2 AND SSRP1</scope>
</reference>
<reference key="9">
    <citation type="journal article" date="2008" name="Mol. Cell">
        <title>Kinase-selective enrichment enables quantitative phosphoproteomics of the kinome across the cell cycle.</title>
        <authorList>
            <person name="Daub H."/>
            <person name="Olsen J.V."/>
            <person name="Bairlein M."/>
            <person name="Gnad F."/>
            <person name="Oppermann F.S."/>
            <person name="Korner R."/>
            <person name="Greff Z."/>
            <person name="Keri G."/>
            <person name="Stemmann O."/>
            <person name="Mann M."/>
        </authorList>
    </citation>
    <scope>PHOSPHORYLATION [LARGE SCALE ANALYSIS] AT SER-1040; SER-1081 AND SER-1677</scope>
    <scope>IDENTIFICATION BY MASS SPECTROMETRY [LARGE SCALE ANALYSIS]</scope>
    <source>
        <tissue>Cervix carcinoma</tissue>
    </source>
</reference>
<reference key="10">
    <citation type="journal article" date="2008" name="Proc. Natl. Acad. Sci. U.S.A.">
        <title>A quantitative atlas of mitotic phosphorylation.</title>
        <authorList>
            <person name="Dephoure N."/>
            <person name="Zhou C."/>
            <person name="Villen J."/>
            <person name="Beausoleil S.A."/>
            <person name="Bakalarski C.E."/>
            <person name="Elledge S.J."/>
            <person name="Gygi S.P."/>
        </authorList>
    </citation>
    <scope>PHOSPHORYLATION [LARGE SCALE ANALYSIS] AT THR-237; SER-241; SER-1040; SER-1096; SER-1098; SER-1100 AND SER-1677</scope>
    <scope>IDENTIFICATION BY MASS SPECTROMETRY [LARGE SCALE ANALYSIS]</scope>
    <source>
        <tissue>Cervix carcinoma</tissue>
    </source>
</reference>
<reference key="11">
    <citation type="journal article" date="2009" name="Sci. Signal.">
        <title>Quantitative phosphoproteomic analysis of T cell receptor signaling reveals system-wide modulation of protein-protein interactions.</title>
        <authorList>
            <person name="Mayya V."/>
            <person name="Lundgren D.H."/>
            <person name="Hwang S.-I."/>
            <person name="Rezaul K."/>
            <person name="Wu L."/>
            <person name="Eng J.K."/>
            <person name="Rodionov V."/>
            <person name="Han D.K."/>
        </authorList>
    </citation>
    <scope>IDENTIFICATION BY MASS SPECTROMETRY [LARGE SCALE ANALYSIS]</scope>
    <source>
        <tissue>Leukemic T-cell</tissue>
    </source>
</reference>
<reference key="12">
    <citation type="journal article" date="2010" name="Sci. Signal.">
        <title>Quantitative phosphoproteomics reveals widespread full phosphorylation site occupancy during mitosis.</title>
        <authorList>
            <person name="Olsen J.V."/>
            <person name="Vermeulen M."/>
            <person name="Santamaria A."/>
            <person name="Kumar C."/>
            <person name="Miller M.L."/>
            <person name="Jensen L.J."/>
            <person name="Gnad F."/>
            <person name="Cox J."/>
            <person name="Jensen T.S."/>
            <person name="Nigg E.A."/>
            <person name="Brunak S."/>
            <person name="Mann M."/>
        </authorList>
    </citation>
    <scope>PHOSPHORYLATION [LARGE SCALE ANALYSIS] AT THR-250; SER-252; SER-1025; SER-1040 AND SER-1677</scope>
    <scope>IDENTIFICATION BY MASS SPECTROMETRY [LARGE SCALE ANALYSIS]</scope>
    <source>
        <tissue>Cervix carcinoma</tissue>
    </source>
</reference>
<reference key="13">
    <citation type="journal article" date="2011" name="BMC Syst. Biol.">
        <title>Initial characterization of the human central proteome.</title>
        <authorList>
            <person name="Burkard T.R."/>
            <person name="Planyavsky M."/>
            <person name="Kaupe I."/>
            <person name="Breitwieser F.P."/>
            <person name="Buerckstuemmer T."/>
            <person name="Bennett K.L."/>
            <person name="Superti-Furga G."/>
            <person name="Colinge J."/>
        </authorList>
    </citation>
    <scope>IDENTIFICATION BY MASS SPECTROMETRY [LARGE SCALE ANALYSIS]</scope>
</reference>
<reference key="14">
    <citation type="journal article" date="2011" name="Sci. Signal.">
        <title>System-wide temporal characterization of the proteome and phosphoproteome of human embryonic stem cell differentiation.</title>
        <authorList>
            <person name="Rigbolt K.T."/>
            <person name="Prokhorova T.A."/>
            <person name="Akimov V."/>
            <person name="Henningsen J."/>
            <person name="Johansen P.T."/>
            <person name="Kratchmarova I."/>
            <person name="Kassem M."/>
            <person name="Mann M."/>
            <person name="Olsen J.V."/>
            <person name="Blagoev B."/>
        </authorList>
    </citation>
    <scope>PHOSPHORYLATION [LARGE SCALE ANALYSIS] AT SER-215; SER-216; SER-1096; SER-1098; SER-1100; SER-1102; SER-1353; SER-1355; SER-1356; SER-1360; SER-1363 AND SER-1371</scope>
    <scope>IDENTIFICATION BY MASS SPECTROMETRY [LARGE SCALE ANALYSIS]</scope>
</reference>
<reference key="15">
    <citation type="journal article" date="2013" name="J. Proteome Res.">
        <title>Toward a comprehensive characterization of a human cancer cell phosphoproteome.</title>
        <authorList>
            <person name="Zhou H."/>
            <person name="Di Palma S."/>
            <person name="Preisinger C."/>
            <person name="Peng M."/>
            <person name="Polat A.N."/>
            <person name="Heck A.J."/>
            <person name="Mohammed S."/>
        </authorList>
    </citation>
    <scope>PHOSPHORYLATION [LARGE SCALE ANALYSIS] AT SER-471; SER-1040; SER-1081; SER-1096; SER-1098; SER-1102; SER-1161; SER-1622; SER-1677 AND SER-1689</scope>
    <scope>PHOSPHORYLATION [LARGE SCALE ANALYSIS] AT SER-1688 (ISOFORM 2)</scope>
    <scope>IDENTIFICATION BY MASS SPECTROMETRY [LARGE SCALE ANALYSIS]</scope>
    <source>
        <tissue>Cervix carcinoma</tissue>
        <tissue>Erythroleukemia</tissue>
    </source>
</reference>
<reference key="16">
    <citation type="journal article" date="2014" name="J. Proteomics">
        <title>An enzyme assisted RP-RPLC approach for in-depth analysis of human liver phosphoproteome.</title>
        <authorList>
            <person name="Bian Y."/>
            <person name="Song C."/>
            <person name="Cheng K."/>
            <person name="Dong M."/>
            <person name="Wang F."/>
            <person name="Huang J."/>
            <person name="Sun D."/>
            <person name="Wang L."/>
            <person name="Ye M."/>
            <person name="Zou H."/>
        </authorList>
    </citation>
    <scope>PHOSPHORYLATION [LARGE SCALE ANALYSIS] AT SER-1677</scope>
    <scope>IDENTIFICATION BY MASS SPECTROMETRY [LARGE SCALE ANALYSIS]</scope>
    <source>
        <tissue>Liver</tissue>
    </source>
</reference>
<reference key="17">
    <citation type="journal article" date="2018" name="J. Med. Genet.">
        <title>Missense variants in the chromatin remodeler CHD1 are associated with neurodevelopmental disability.</title>
        <authorList>
            <person name="Pilarowski G.O."/>
            <person name="Vernon H.J."/>
            <person name="Applegate C.D."/>
            <person name="Boukas L."/>
            <person name="Cho M.T."/>
            <person name="Gurnett C.A."/>
            <person name="Benke P.J."/>
            <person name="Beaver E."/>
            <person name="Heeley J.M."/>
            <person name="Medne L."/>
            <person name="Krantz I.D."/>
            <person name="Azage M."/>
            <person name="Niyazov D."/>
            <person name="Henderson L.B."/>
            <person name="Wentzensen I.M."/>
            <person name="Baskin B."/>
            <person name="Sacoto M.J.G."/>
            <person name="Bowman G.D."/>
            <person name="Bjornsson H.T."/>
        </authorList>
    </citation>
    <scope>FUNCTION</scope>
    <scope>TISSUE SPECIFICITY</scope>
    <scope>INVOLVEMENT IN PILBOS</scope>
    <scope>VARIANTS PILBOS GLY-141; LYS-460; GLN-618 AND GLN-1708</scope>
    <scope>CHARACTERIZATION OF VARIANT PILBOS GLN-618</scope>
</reference>
<reference key="18">
    <citation type="journal article" date="2005" name="Nature">
        <title>Double chromodomains cooperate to recognize the methylated histone H3 tail.</title>
        <authorList>
            <person name="Flanagan J.F."/>
            <person name="Mi L.-Z."/>
            <person name="Chruszcz M."/>
            <person name="Cymborowski M."/>
            <person name="Clines K.L."/>
            <person name="Kim Y."/>
            <person name="Minor W."/>
            <person name="Rastinejad F."/>
            <person name="Khorasanizadeh S."/>
        </authorList>
    </citation>
    <scope>X-RAY CRYSTALLOGRAPHY (2.35 ANGSTROMS) OF 268-443</scope>
    <scope>INTERACTION WITH HISTONE H3K4ME3</scope>
</reference>
<reference evidence="19" key="19">
    <citation type="journal article" date="2016" name="J. Mol. Biol.">
        <title>The Chromatin Remodelling Protein CHD1 Contains a Previously Unrecognised C-Terminal Helical Domain.</title>
        <authorList>
            <person name="Mohanty B."/>
            <person name="Helder S."/>
            <person name="Silva A.P."/>
            <person name="Mackay J.P."/>
            <person name="Ryan D.P."/>
        </authorList>
    </citation>
    <scope>STRUCTURE BY NMR OF 1409-1511</scope>
    <scope>DOMAIN</scope>
    <scope>DNA-BINDING</scope>
    <scope>MUTAGENESIS OF 1418-LYS--LYS-1425; 1429-LYS--LYS-1436; 1491-ARG--LYS-1495 AND 1498-LYS--LYS-1503</scope>
</reference>
<accession>O14646</accession>
<accession>Q17RZ3</accession>
<gene>
    <name evidence="18" type="primary">CHD1</name>
</gene>
<evidence type="ECO:0000250" key="1"/>
<evidence type="ECO:0000250" key="2">
    <source>
        <dbReference type="UniProtKB" id="O14647"/>
    </source>
</evidence>
<evidence type="ECO:0000250" key="3">
    <source>
        <dbReference type="UniProtKB" id="P40201"/>
    </source>
</evidence>
<evidence type="ECO:0000250" key="4">
    <source>
        <dbReference type="UniProtKB" id="Q12873"/>
    </source>
</evidence>
<evidence type="ECO:0000255" key="5">
    <source>
        <dbReference type="PROSITE-ProRule" id="PRU00053"/>
    </source>
</evidence>
<evidence type="ECO:0000255" key="6">
    <source>
        <dbReference type="PROSITE-ProRule" id="PRU00541"/>
    </source>
</evidence>
<evidence type="ECO:0000255" key="7">
    <source>
        <dbReference type="PROSITE-ProRule" id="PRU00542"/>
    </source>
</evidence>
<evidence type="ECO:0000256" key="8">
    <source>
        <dbReference type="SAM" id="MobiDB-lite"/>
    </source>
</evidence>
<evidence type="ECO:0000269" key="9">
    <source>
    </source>
</evidence>
<evidence type="ECO:0000269" key="10">
    <source>
    </source>
</evidence>
<evidence type="ECO:0000269" key="11">
    <source>
    </source>
</evidence>
<evidence type="ECO:0000269" key="12">
    <source>
    </source>
</evidence>
<evidence type="ECO:0000269" key="13">
    <source>
    </source>
</evidence>
<evidence type="ECO:0000269" key="14">
    <source>
    </source>
</evidence>
<evidence type="ECO:0000303" key="15">
    <source>
    </source>
</evidence>
<evidence type="ECO:0000303" key="16">
    <source>
    </source>
</evidence>
<evidence type="ECO:0000305" key="17"/>
<evidence type="ECO:0000312" key="18">
    <source>
        <dbReference type="HGNC" id="HGNC:1915"/>
    </source>
</evidence>
<evidence type="ECO:0007744" key="19">
    <source>
        <dbReference type="PDB" id="2N39"/>
    </source>
</evidence>
<evidence type="ECO:0007744" key="20">
    <source>
    </source>
</evidence>
<evidence type="ECO:0007744" key="21">
    <source>
    </source>
</evidence>
<evidence type="ECO:0007744" key="22">
    <source>
    </source>
</evidence>
<evidence type="ECO:0007744" key="23">
    <source>
    </source>
</evidence>
<evidence type="ECO:0007744" key="24">
    <source>
    </source>
</evidence>
<evidence type="ECO:0007744" key="25">
    <source>
    </source>
</evidence>
<evidence type="ECO:0007829" key="26">
    <source>
        <dbReference type="PDB" id="2B2W"/>
    </source>
</evidence>
<evidence type="ECO:0007829" key="27">
    <source>
        <dbReference type="PDB" id="2N39"/>
    </source>
</evidence>
<evidence type="ECO:0007829" key="28">
    <source>
        <dbReference type="PDB" id="4B4C"/>
    </source>
</evidence>
<evidence type="ECO:0007829" key="29">
    <source>
        <dbReference type="PDB" id="5AFW"/>
    </source>
</evidence>
<dbReference type="EC" id="3.6.4.-" evidence="4"/>
<dbReference type="EMBL" id="AF006513">
    <property type="protein sequence ID" value="AAB87381.1"/>
    <property type="molecule type" value="mRNA"/>
</dbReference>
<dbReference type="EMBL" id="AC022121">
    <property type="status" value="NOT_ANNOTATED_CDS"/>
    <property type="molecule type" value="Genomic_DNA"/>
</dbReference>
<dbReference type="EMBL" id="BC117134">
    <property type="protein sequence ID" value="AAI17135.1"/>
    <property type="molecule type" value="mRNA"/>
</dbReference>
<dbReference type="CCDS" id="CCDS34204.1">
    <molecule id="O14646-1"/>
</dbReference>
<dbReference type="RefSeq" id="NP_001261.2">
    <molecule id="O14646-1"/>
    <property type="nucleotide sequence ID" value="NM_001270.4"/>
</dbReference>
<dbReference type="RefSeq" id="NP_001363123.1">
    <molecule id="O14646-1"/>
    <property type="nucleotide sequence ID" value="NM_001376194.2"/>
</dbReference>
<dbReference type="RefSeq" id="XP_005271924.1">
    <property type="nucleotide sequence ID" value="XM_005271867.4"/>
</dbReference>
<dbReference type="RefSeq" id="XP_047272625.1">
    <molecule id="O14646-1"/>
    <property type="nucleotide sequence ID" value="XM_047416669.1"/>
</dbReference>
<dbReference type="RefSeq" id="XP_054207482.1">
    <molecule id="O14646-1"/>
    <property type="nucleotide sequence ID" value="XM_054351507.1"/>
</dbReference>
<dbReference type="PDB" id="2B2T">
    <property type="method" value="X-ray"/>
    <property type="resolution" value="2.45 A"/>
    <property type="chains" value="A/B=268-443, C=268-373"/>
</dbReference>
<dbReference type="PDB" id="2B2U">
    <property type="method" value="X-ray"/>
    <property type="resolution" value="2.95 A"/>
    <property type="chains" value="A/B=268-443, C=268-373"/>
</dbReference>
<dbReference type="PDB" id="2B2V">
    <property type="method" value="X-ray"/>
    <property type="resolution" value="2.65 A"/>
    <property type="chains" value="A/B=268-443, C=268-373"/>
</dbReference>
<dbReference type="PDB" id="2B2W">
    <property type="method" value="X-ray"/>
    <property type="resolution" value="2.40 A"/>
    <property type="chains" value="A/B=268-443, C=268-373"/>
</dbReference>
<dbReference type="PDB" id="2B2Y">
    <property type="method" value="X-ray"/>
    <property type="resolution" value="2.35 A"/>
    <property type="chains" value="A/B=268-443, C=268-373"/>
</dbReference>
<dbReference type="PDB" id="2N39">
    <property type="method" value="NMR"/>
    <property type="chains" value="A=1409-1511"/>
</dbReference>
<dbReference type="PDB" id="4B4C">
    <property type="method" value="X-ray"/>
    <property type="resolution" value="1.62 A"/>
    <property type="chains" value="A=1119-1327"/>
</dbReference>
<dbReference type="PDB" id="4NW2">
    <property type="method" value="X-ray"/>
    <property type="resolution" value="1.90 A"/>
    <property type="chains" value="A/C=268-443"/>
</dbReference>
<dbReference type="PDB" id="4O42">
    <property type="method" value="X-ray"/>
    <property type="resolution" value="1.87 A"/>
    <property type="chains" value="A=268-443"/>
</dbReference>
<dbReference type="PDB" id="5AFW">
    <property type="method" value="X-ray"/>
    <property type="resolution" value="1.60 A"/>
    <property type="chains" value="A=270-443"/>
</dbReference>
<dbReference type="PDB" id="8UMG">
    <property type="method" value="X-ray"/>
    <property type="resolution" value="3.10 A"/>
    <property type="chains" value="A/B/C=268-445"/>
</dbReference>
<dbReference type="PDBsum" id="2B2T"/>
<dbReference type="PDBsum" id="2B2U"/>
<dbReference type="PDBsum" id="2B2V"/>
<dbReference type="PDBsum" id="2B2W"/>
<dbReference type="PDBsum" id="2B2Y"/>
<dbReference type="PDBsum" id="2N39"/>
<dbReference type="PDBsum" id="4B4C"/>
<dbReference type="PDBsum" id="4NW2"/>
<dbReference type="PDBsum" id="4O42"/>
<dbReference type="PDBsum" id="5AFW"/>
<dbReference type="PDBsum" id="8UMG"/>
<dbReference type="SMR" id="O14646"/>
<dbReference type="BioGRID" id="107530">
    <property type="interactions" value="135"/>
</dbReference>
<dbReference type="DIP" id="DIP-38922N"/>
<dbReference type="FunCoup" id="O14646">
    <property type="interactions" value="3515"/>
</dbReference>
<dbReference type="IntAct" id="O14646">
    <property type="interactions" value="34"/>
</dbReference>
<dbReference type="MINT" id="O14646"/>
<dbReference type="STRING" id="9606.ENSP00000483667"/>
<dbReference type="ChEMBL" id="CHEMBL4523123"/>
<dbReference type="CarbonylDB" id="O14646"/>
<dbReference type="GlyGen" id="O14646">
    <property type="glycosylation" value="2 sites, 1 N-linked glycan (1 site), 1 O-linked glycan (1 site)"/>
</dbReference>
<dbReference type="iPTMnet" id="O14646"/>
<dbReference type="MetOSite" id="O14646"/>
<dbReference type="PhosphoSitePlus" id="O14646"/>
<dbReference type="SwissPalm" id="O14646"/>
<dbReference type="BioMuta" id="CHD1"/>
<dbReference type="jPOST" id="O14646"/>
<dbReference type="MassIVE" id="O14646"/>
<dbReference type="PaxDb" id="9606-ENSP00000483667"/>
<dbReference type="PeptideAtlas" id="O14646"/>
<dbReference type="ProteomicsDB" id="48142">
    <molecule id="O14646-1"/>
</dbReference>
<dbReference type="ProteomicsDB" id="48143">
    <molecule id="O14646-2"/>
</dbReference>
<dbReference type="Pumba" id="O14646"/>
<dbReference type="ABCD" id="O14646">
    <property type="antibodies" value="1 sequenced antibody"/>
</dbReference>
<dbReference type="Antibodypedia" id="25129">
    <property type="antibodies" value="206 antibodies from 36 providers"/>
</dbReference>
<dbReference type="DNASU" id="1105"/>
<dbReference type="Ensembl" id="ENST00000614616.5">
    <molecule id="O14646-1"/>
    <property type="protein sequence ID" value="ENSP00000483667.1"/>
    <property type="gene ID" value="ENSG00000153922.12"/>
</dbReference>
<dbReference type="GeneID" id="1105"/>
<dbReference type="KEGG" id="hsa:1105"/>
<dbReference type="MANE-Select" id="ENST00000614616.5">
    <property type="protein sequence ID" value="ENSP00000483667.1"/>
    <property type="RefSeq nucleotide sequence ID" value="NM_001270.4"/>
    <property type="RefSeq protein sequence ID" value="NP_001261.2"/>
</dbReference>
<dbReference type="UCSC" id="uc003knf.3">
    <molecule id="O14646-1"/>
    <property type="organism name" value="human"/>
</dbReference>
<dbReference type="AGR" id="HGNC:1915"/>
<dbReference type="CTD" id="1105"/>
<dbReference type="DisGeNET" id="1105"/>
<dbReference type="GeneCards" id="CHD1"/>
<dbReference type="HGNC" id="HGNC:1915">
    <property type="gene designation" value="CHD1"/>
</dbReference>
<dbReference type="HPA" id="ENSG00000153922">
    <property type="expression patterns" value="Low tissue specificity"/>
</dbReference>
<dbReference type="MalaCards" id="CHD1"/>
<dbReference type="MIM" id="602118">
    <property type="type" value="gene"/>
</dbReference>
<dbReference type="MIM" id="617682">
    <property type="type" value="phenotype"/>
</dbReference>
<dbReference type="neXtProt" id="NX_O14646"/>
<dbReference type="OpenTargets" id="ENSG00000153922"/>
<dbReference type="Orphanet" id="529965">
    <property type="disease" value="Intellectual disability-autism-speech apraxia-craniofacial dysmorphism syndrome"/>
</dbReference>
<dbReference type="PharmGKB" id="PA26451"/>
<dbReference type="VEuPathDB" id="HostDB:ENSG00000153922"/>
<dbReference type="eggNOG" id="KOG0384">
    <property type="taxonomic scope" value="Eukaryota"/>
</dbReference>
<dbReference type="GeneTree" id="ENSGT00940000156579"/>
<dbReference type="HOGENOM" id="CLU_000315_8_1_1"/>
<dbReference type="InParanoid" id="O14646"/>
<dbReference type="OMA" id="WVQIRDD"/>
<dbReference type="OrthoDB" id="5857104at2759"/>
<dbReference type="PAN-GO" id="O14646">
    <property type="GO annotations" value="9 GO annotations based on evolutionary models"/>
</dbReference>
<dbReference type="PhylomeDB" id="O14646"/>
<dbReference type="TreeFam" id="TF313461"/>
<dbReference type="PathwayCommons" id="O14646"/>
<dbReference type="Reactome" id="R-HSA-9018519">
    <property type="pathway name" value="Estrogen-dependent gene expression"/>
</dbReference>
<dbReference type="SignaLink" id="O14646"/>
<dbReference type="SIGNOR" id="O14646"/>
<dbReference type="BioGRID-ORCS" id="1105">
    <property type="hits" value="146 hits in 1186 CRISPR screens"/>
</dbReference>
<dbReference type="CD-CODE" id="DEE660B4">
    <property type="entry name" value="Stress granule"/>
</dbReference>
<dbReference type="ChiTaRS" id="CHD1">
    <property type="organism name" value="human"/>
</dbReference>
<dbReference type="EvolutionaryTrace" id="O14646"/>
<dbReference type="GeneWiki" id="CHD1"/>
<dbReference type="GenomeRNAi" id="1105"/>
<dbReference type="Pharos" id="O14646">
    <property type="development level" value="Tbio"/>
</dbReference>
<dbReference type="PRO" id="PR:O14646"/>
<dbReference type="Proteomes" id="UP000005640">
    <property type="component" value="Chromosome 5"/>
</dbReference>
<dbReference type="RNAct" id="O14646">
    <property type="molecule type" value="protein"/>
</dbReference>
<dbReference type="Bgee" id="ENSG00000153922">
    <property type="expression patterns" value="Expressed in calcaneal tendon and 197 other cell types or tissues"/>
</dbReference>
<dbReference type="ExpressionAtlas" id="O14646">
    <property type="expression patterns" value="baseline and differential"/>
</dbReference>
<dbReference type="GO" id="GO:0000785">
    <property type="term" value="C:chromatin"/>
    <property type="evidence" value="ECO:0000318"/>
    <property type="project" value="GO_Central"/>
</dbReference>
<dbReference type="GO" id="GO:0005737">
    <property type="term" value="C:cytoplasm"/>
    <property type="evidence" value="ECO:0000314"/>
    <property type="project" value="CACAO"/>
</dbReference>
<dbReference type="GO" id="GO:0000228">
    <property type="term" value="C:nuclear chromosome"/>
    <property type="evidence" value="ECO:0000314"/>
    <property type="project" value="GO_Central"/>
</dbReference>
<dbReference type="GO" id="GO:0005654">
    <property type="term" value="C:nucleoplasm"/>
    <property type="evidence" value="ECO:0000304"/>
    <property type="project" value="Reactome"/>
</dbReference>
<dbReference type="GO" id="GO:0005634">
    <property type="term" value="C:nucleus"/>
    <property type="evidence" value="ECO:0000314"/>
    <property type="project" value="CACAO"/>
</dbReference>
<dbReference type="GO" id="GO:0005524">
    <property type="term" value="F:ATP binding"/>
    <property type="evidence" value="ECO:0007669"/>
    <property type="project" value="UniProtKB-KW"/>
</dbReference>
<dbReference type="GO" id="GO:0016887">
    <property type="term" value="F:ATP hydrolysis activity"/>
    <property type="evidence" value="ECO:0000318"/>
    <property type="project" value="GO_Central"/>
</dbReference>
<dbReference type="GO" id="GO:0140658">
    <property type="term" value="F:ATP-dependent chromatin remodeler activity"/>
    <property type="evidence" value="ECO:0000318"/>
    <property type="project" value="GO_Central"/>
</dbReference>
<dbReference type="GO" id="GO:0003682">
    <property type="term" value="F:chromatin binding"/>
    <property type="evidence" value="ECO:0000318"/>
    <property type="project" value="GO_Central"/>
</dbReference>
<dbReference type="GO" id="GO:0003677">
    <property type="term" value="F:DNA binding"/>
    <property type="evidence" value="ECO:0000318"/>
    <property type="project" value="GO_Central"/>
</dbReference>
<dbReference type="GO" id="GO:0004386">
    <property type="term" value="F:helicase activity"/>
    <property type="evidence" value="ECO:0007669"/>
    <property type="project" value="UniProtKB-KW"/>
</dbReference>
<dbReference type="GO" id="GO:0042393">
    <property type="term" value="F:histone binding"/>
    <property type="evidence" value="ECO:0000318"/>
    <property type="project" value="GO_Central"/>
</dbReference>
<dbReference type="GO" id="GO:0140002">
    <property type="term" value="F:histone H3K4me3 reader activity"/>
    <property type="evidence" value="ECO:0000314"/>
    <property type="project" value="UniProtKB"/>
</dbReference>
<dbReference type="GO" id="GO:0006338">
    <property type="term" value="P:chromatin remodeling"/>
    <property type="evidence" value="ECO:0000315"/>
    <property type="project" value="UniProtKB"/>
</dbReference>
<dbReference type="GO" id="GO:0034728">
    <property type="term" value="P:nucleosome organization"/>
    <property type="evidence" value="ECO:0000318"/>
    <property type="project" value="GO_Central"/>
</dbReference>
<dbReference type="GO" id="GO:0043923">
    <property type="term" value="P:positive regulation by host of viral transcription"/>
    <property type="evidence" value="ECO:0000315"/>
    <property type="project" value="CACAO"/>
</dbReference>
<dbReference type="CDD" id="cd18666">
    <property type="entry name" value="CD1_tandem_CHD1-2_like"/>
    <property type="match status" value="1"/>
</dbReference>
<dbReference type="CDD" id="cd18661">
    <property type="entry name" value="CD2_tandem_CHD1-2_like"/>
    <property type="match status" value="1"/>
</dbReference>
<dbReference type="CDD" id="cd18793">
    <property type="entry name" value="SF2_C_SNF"/>
    <property type="match status" value="1"/>
</dbReference>
<dbReference type="FunFam" id="1.10.10.60:FF:000106">
    <property type="entry name" value="Chromodomain-helicase-DNA-binding protein 2 isoform 1"/>
    <property type="match status" value="1"/>
</dbReference>
<dbReference type="FunFam" id="2.40.50.40:FF:000008">
    <property type="entry name" value="Chromodomain-helicase-DNA-binding protein 2 isoform 1"/>
    <property type="match status" value="1"/>
</dbReference>
<dbReference type="FunFam" id="2.40.50.40:FF:000014">
    <property type="entry name" value="Chromodomain-helicase-DNA-binding protein 2 isoform 1"/>
    <property type="match status" value="1"/>
</dbReference>
<dbReference type="FunFam" id="3.40.50.10810:FF:000007">
    <property type="entry name" value="Chromodomain-helicase-DNA-binding protein 2 isoform 1"/>
    <property type="match status" value="1"/>
</dbReference>
<dbReference type="FunFam" id="3.40.50.300:FF:000130">
    <property type="entry name" value="Chromodomain-helicase-DNA-binding protein 2 isoform 1"/>
    <property type="match status" value="1"/>
</dbReference>
<dbReference type="Gene3D" id="2.40.50.40">
    <property type="match status" value="2"/>
</dbReference>
<dbReference type="Gene3D" id="1.10.10.60">
    <property type="entry name" value="Homeodomain-like"/>
    <property type="match status" value="1"/>
</dbReference>
<dbReference type="Gene3D" id="3.40.50.300">
    <property type="entry name" value="P-loop containing nucleotide triphosphate hydrolases"/>
    <property type="match status" value="1"/>
</dbReference>
<dbReference type="Gene3D" id="3.40.50.10810">
    <property type="entry name" value="Tandem AAA-ATPase domain"/>
    <property type="match status" value="1"/>
</dbReference>
<dbReference type="IDEAL" id="IID00003"/>
<dbReference type="InterPro" id="IPR040793">
    <property type="entry name" value="CDH1_2_SANT_HL1"/>
</dbReference>
<dbReference type="InterPro" id="IPR056302">
    <property type="entry name" value="CHD1-2/Hrp3_HTH"/>
</dbReference>
<dbReference type="InterPro" id="IPR025260">
    <property type="entry name" value="CHD1-like_C"/>
</dbReference>
<dbReference type="InterPro" id="IPR016197">
    <property type="entry name" value="Chromo-like_dom_sf"/>
</dbReference>
<dbReference type="InterPro" id="IPR000953">
    <property type="entry name" value="Chromo/chromo_shadow_dom"/>
</dbReference>
<dbReference type="InterPro" id="IPR023780">
    <property type="entry name" value="Chromo_domain"/>
</dbReference>
<dbReference type="InterPro" id="IPR023779">
    <property type="entry name" value="Chromodomain_CS"/>
</dbReference>
<dbReference type="InterPro" id="IPR014001">
    <property type="entry name" value="Helicase_ATP-bd"/>
</dbReference>
<dbReference type="InterPro" id="IPR001650">
    <property type="entry name" value="Helicase_C-like"/>
</dbReference>
<dbReference type="InterPro" id="IPR027417">
    <property type="entry name" value="P-loop_NTPase"/>
</dbReference>
<dbReference type="InterPro" id="IPR038718">
    <property type="entry name" value="SNF2-like_sf"/>
</dbReference>
<dbReference type="InterPro" id="IPR049730">
    <property type="entry name" value="SNF2/RAD54-like_C"/>
</dbReference>
<dbReference type="InterPro" id="IPR000330">
    <property type="entry name" value="SNF2_N"/>
</dbReference>
<dbReference type="PANTHER" id="PTHR45623:SF7">
    <property type="entry name" value="CHROMODOMAIN-HELICASE-DNA-BINDING PROTEIN 1"/>
    <property type="match status" value="1"/>
</dbReference>
<dbReference type="PANTHER" id="PTHR45623">
    <property type="entry name" value="CHROMODOMAIN-HELICASE-DNA-BINDING PROTEIN 3-RELATED-RELATED"/>
    <property type="match status" value="1"/>
</dbReference>
<dbReference type="Pfam" id="PF18375">
    <property type="entry name" value="CDH1_2_SANT_HL1"/>
    <property type="match status" value="1"/>
</dbReference>
<dbReference type="Pfam" id="PF13907">
    <property type="entry name" value="CHD1-like_C"/>
    <property type="match status" value="1"/>
</dbReference>
<dbReference type="Pfam" id="PF00385">
    <property type="entry name" value="Chromo"/>
    <property type="match status" value="2"/>
</dbReference>
<dbReference type="Pfam" id="PF00271">
    <property type="entry name" value="Helicase_C"/>
    <property type="match status" value="1"/>
</dbReference>
<dbReference type="Pfam" id="PF23588">
    <property type="entry name" value="HTH_CHD1_Hrp3"/>
    <property type="match status" value="1"/>
</dbReference>
<dbReference type="Pfam" id="PF00176">
    <property type="entry name" value="SNF2-rel_dom"/>
    <property type="match status" value="1"/>
</dbReference>
<dbReference type="SMART" id="SM00298">
    <property type="entry name" value="CHROMO"/>
    <property type="match status" value="2"/>
</dbReference>
<dbReference type="SMART" id="SM00487">
    <property type="entry name" value="DEXDc"/>
    <property type="match status" value="1"/>
</dbReference>
<dbReference type="SMART" id="SM01176">
    <property type="entry name" value="DUF4208"/>
    <property type="match status" value="1"/>
</dbReference>
<dbReference type="SMART" id="SM00490">
    <property type="entry name" value="HELICc"/>
    <property type="match status" value="1"/>
</dbReference>
<dbReference type="SUPFAM" id="SSF54160">
    <property type="entry name" value="Chromo domain-like"/>
    <property type="match status" value="2"/>
</dbReference>
<dbReference type="SUPFAM" id="SSF52540">
    <property type="entry name" value="P-loop containing nucleoside triphosphate hydrolases"/>
    <property type="match status" value="2"/>
</dbReference>
<dbReference type="PROSITE" id="PS00598">
    <property type="entry name" value="CHROMO_1"/>
    <property type="match status" value="2"/>
</dbReference>
<dbReference type="PROSITE" id="PS50013">
    <property type="entry name" value="CHROMO_2"/>
    <property type="match status" value="2"/>
</dbReference>
<dbReference type="PROSITE" id="PS51192">
    <property type="entry name" value="HELICASE_ATP_BIND_1"/>
    <property type="match status" value="1"/>
</dbReference>
<dbReference type="PROSITE" id="PS51194">
    <property type="entry name" value="HELICASE_CTER"/>
    <property type="match status" value="1"/>
</dbReference>
<feature type="chain" id="PRO_0000080224" description="Chromodomain-helicase-DNA-binding protein 1">
    <location>
        <begin position="1"/>
        <end position="1710"/>
    </location>
</feature>
<feature type="domain" description="Chromo 1" evidence="5">
    <location>
        <begin position="272"/>
        <end position="364"/>
    </location>
</feature>
<feature type="domain" description="Chromo 2" evidence="5">
    <location>
        <begin position="389"/>
        <end position="452"/>
    </location>
</feature>
<feature type="domain" description="Helicase ATP-binding" evidence="6">
    <location>
        <begin position="493"/>
        <end position="663"/>
    </location>
</feature>
<feature type="domain" description="Helicase C-terminal" evidence="7">
    <location>
        <begin position="792"/>
        <end position="943"/>
    </location>
</feature>
<feature type="repeat" description="1">
    <location>
        <begin position="1628"/>
        <end position="1632"/>
    </location>
</feature>
<feature type="repeat" description="2">
    <location>
        <begin position="1634"/>
        <end position="1638"/>
    </location>
</feature>
<feature type="repeat" description="3">
    <location>
        <begin position="1640"/>
        <end position="1644"/>
    </location>
</feature>
<feature type="region of interest" description="Disordered" evidence="8">
    <location>
        <begin position="1"/>
        <end position="252"/>
    </location>
</feature>
<feature type="region of interest" description="Disordered" evidence="8">
    <location>
        <begin position="1080"/>
        <end position="1120"/>
    </location>
</feature>
<feature type="region of interest" description="Disordered" evidence="8">
    <location>
        <begin position="1321"/>
        <end position="1408"/>
    </location>
</feature>
<feature type="region of interest" description="CHD1 helical C-terminal domain (CHCT)" evidence="13 19">
    <location>
        <begin position="1409"/>
        <end position="1511"/>
    </location>
</feature>
<feature type="region of interest" description="Disordered" evidence="8">
    <location>
        <begin position="1502"/>
        <end position="1710"/>
    </location>
</feature>
<feature type="region of interest" description="3 X 5 AA repeats of H-S-D-H-R">
    <location>
        <begin position="1628"/>
        <end position="1644"/>
    </location>
</feature>
<feature type="short sequence motif" description="DEAH box">
    <location>
        <begin position="614"/>
        <end position="617"/>
    </location>
</feature>
<feature type="compositionally biased region" description="Basic and acidic residues" evidence="8">
    <location>
        <begin position="1"/>
        <end position="10"/>
    </location>
</feature>
<feature type="compositionally biased region" description="Low complexity" evidence="8">
    <location>
        <begin position="35"/>
        <end position="63"/>
    </location>
</feature>
<feature type="compositionally biased region" description="Basic and acidic residues" evidence="8">
    <location>
        <begin position="67"/>
        <end position="85"/>
    </location>
</feature>
<feature type="compositionally biased region" description="Low complexity" evidence="8">
    <location>
        <begin position="105"/>
        <end position="121"/>
    </location>
</feature>
<feature type="compositionally biased region" description="Acidic residues" evidence="8">
    <location>
        <begin position="122"/>
        <end position="136"/>
    </location>
</feature>
<feature type="compositionally biased region" description="Low complexity" evidence="8">
    <location>
        <begin position="152"/>
        <end position="163"/>
    </location>
</feature>
<feature type="compositionally biased region" description="Basic residues" evidence="8">
    <location>
        <begin position="187"/>
        <end position="210"/>
    </location>
</feature>
<feature type="compositionally biased region" description="Acidic residues" evidence="8">
    <location>
        <begin position="215"/>
        <end position="226"/>
    </location>
</feature>
<feature type="compositionally biased region" description="Basic residues" evidence="8">
    <location>
        <begin position="1108"/>
        <end position="1117"/>
    </location>
</feature>
<feature type="compositionally biased region" description="Basic residues" evidence="8">
    <location>
        <begin position="1329"/>
        <end position="1345"/>
    </location>
</feature>
<feature type="compositionally biased region" description="Basic and acidic residues" evidence="8">
    <location>
        <begin position="1370"/>
        <end position="1379"/>
    </location>
</feature>
<feature type="compositionally biased region" description="Low complexity" evidence="8">
    <location>
        <begin position="1507"/>
        <end position="1516"/>
    </location>
</feature>
<feature type="compositionally biased region" description="Basic and acidic residues" evidence="8">
    <location>
        <begin position="1523"/>
        <end position="1573"/>
    </location>
</feature>
<feature type="compositionally biased region" description="Basic and acidic residues" evidence="8">
    <location>
        <begin position="1582"/>
        <end position="1670"/>
    </location>
</feature>
<feature type="compositionally biased region" description="Basic and acidic residues" evidence="8">
    <location>
        <begin position="1690"/>
        <end position="1701"/>
    </location>
</feature>
<feature type="binding site" evidence="6">
    <location>
        <begin position="506"/>
        <end position="513"/>
    </location>
    <ligand>
        <name>ATP</name>
        <dbReference type="ChEBI" id="CHEBI:30616"/>
    </ligand>
</feature>
<feature type="modified residue" description="Phosphoserine" evidence="23">
    <location>
        <position position="215"/>
    </location>
</feature>
<feature type="modified residue" description="Phosphoserine" evidence="23">
    <location>
        <position position="216"/>
    </location>
</feature>
<feature type="modified residue" description="Phosphothreonine" evidence="20">
    <location>
        <position position="237"/>
    </location>
</feature>
<feature type="modified residue" description="Phosphoserine" evidence="20">
    <location>
        <position position="241"/>
    </location>
</feature>
<feature type="modified residue" description="Phosphothreonine" evidence="22">
    <location>
        <position position="250"/>
    </location>
</feature>
<feature type="modified residue" description="Phosphoserine" evidence="22">
    <location>
        <position position="252"/>
    </location>
</feature>
<feature type="modified residue" description="Phosphoserine" evidence="24">
    <location>
        <position position="471"/>
    </location>
</feature>
<feature type="modified residue" description="Phosphoserine" evidence="22">
    <location>
        <position position="1025"/>
    </location>
</feature>
<feature type="modified residue" description="Phosphoserine" evidence="20 21 22 24">
    <location>
        <position position="1040"/>
    </location>
</feature>
<feature type="modified residue" description="Phosphoserine" evidence="21 24">
    <location>
        <position position="1081"/>
    </location>
</feature>
<feature type="modified residue" description="Phosphoserine" evidence="2">
    <location>
        <position position="1085"/>
    </location>
</feature>
<feature type="modified residue" description="Phosphoserine" evidence="20 23 24">
    <location>
        <position position="1096"/>
    </location>
</feature>
<feature type="modified residue" description="Phosphoserine" evidence="20 23 24">
    <location>
        <position position="1098"/>
    </location>
</feature>
<feature type="modified residue" description="Phosphoserine" evidence="20 23">
    <location>
        <position position="1100"/>
    </location>
</feature>
<feature type="modified residue" description="Phosphoserine" evidence="23 24">
    <location>
        <position position="1102"/>
    </location>
</feature>
<feature type="modified residue" description="Phosphoserine" evidence="24">
    <location>
        <position position="1161"/>
    </location>
</feature>
<feature type="modified residue" description="Phosphoserine" evidence="23">
    <location>
        <position position="1353"/>
    </location>
</feature>
<feature type="modified residue" description="Phosphoserine" evidence="23">
    <location>
        <position position="1355"/>
    </location>
</feature>
<feature type="modified residue" description="Phosphoserine" evidence="23">
    <location>
        <position position="1356"/>
    </location>
</feature>
<feature type="modified residue" description="Phosphoserine" evidence="23">
    <location>
        <position position="1360"/>
    </location>
</feature>
<feature type="modified residue" description="Phosphoserine" evidence="23">
    <location>
        <position position="1363"/>
    </location>
</feature>
<feature type="modified residue" description="Phosphoserine" evidence="23">
    <location>
        <position position="1371"/>
    </location>
</feature>
<feature type="modified residue" description="Phosphoserine" evidence="2">
    <location>
        <position position="1373"/>
    </location>
</feature>
<feature type="modified residue" description="Phosphoserine" evidence="24">
    <location>
        <position position="1622"/>
    </location>
</feature>
<feature type="modified residue" description="Phosphoserine" evidence="20 21 22 24 25">
    <location>
        <position position="1677"/>
    </location>
</feature>
<feature type="modified residue" description="Phosphoserine" evidence="24">
    <location>
        <position position="1689"/>
    </location>
</feature>
<feature type="splice variant" id="VSP_038432" description="In isoform 2." evidence="15 16">
    <location>
        <position position="1684"/>
    </location>
</feature>
<feature type="sequence variant" id="VAR_080265" description="In PILBOS; dbSNP:rs1064795875." evidence="14">
    <original>R</original>
    <variation>G</variation>
    <location>
        <position position="141"/>
    </location>
</feature>
<feature type="sequence variant" id="VAR_055652" description="In dbSNP:rs10062803.">
    <original>P</original>
    <variation>T</variation>
    <location>
        <position position="264"/>
    </location>
</feature>
<feature type="sequence variant" id="VAR_080266" description="In PILBOS; dbSNP:rs1554078856." evidence="14">
    <original>R</original>
    <variation>K</variation>
    <location>
        <position position="460"/>
    </location>
</feature>
<feature type="sequence variant" id="VAR_080267" description="In PILBOS; patient cells show a global increase of methylated histone binding; dbSNP:rs1554078349." evidence="14">
    <original>R</original>
    <variation>Q</variation>
    <location>
        <position position="618"/>
    </location>
</feature>
<feature type="sequence variant" id="VAR_080268" description="In PILBOS; dbSNP:rs1293161341." evidence="14">
    <original>R</original>
    <variation>Q</variation>
    <location>
        <position position="1708"/>
    </location>
</feature>
<feature type="mutagenesis site" description="Abolishes DNA-binding." evidence="13">
    <original>KERMRPVK</original>
    <variation>AERMAPVA</variation>
    <location>
        <begin position="1418"/>
        <end position="1425"/>
    </location>
</feature>
<feature type="mutagenesis site" description="Abolishes DNA-binding." evidence="13">
    <original>KQLDRPEK</original>
    <variation>AQLDAPEA</variation>
    <location>
        <begin position="1429"/>
        <end position="1436"/>
    </location>
</feature>
<feature type="mutagenesis site" description="Abolishes DNA-binding." evidence="13">
    <original>RKLHK</original>
    <variation>AALHA</variation>
    <location>
        <begin position="1491"/>
        <end position="1495"/>
    </location>
</feature>
<feature type="mutagenesis site" description="Abolishes DNA-binding." evidence="13">
    <original>KHAIKK</original>
    <variation>AHAIAA</variation>
    <location>
        <begin position="1498"/>
        <end position="1503"/>
    </location>
</feature>
<feature type="sequence conflict" description="In Ref. 1; AAB87381." evidence="17" ref="1">
    <original>E</original>
    <variation>G</variation>
    <location>
        <position position="392"/>
    </location>
</feature>
<feature type="strand" evidence="29">
    <location>
        <begin position="273"/>
        <end position="284"/>
    </location>
</feature>
<feature type="helix" evidence="29">
    <location>
        <begin position="290"/>
        <end position="292"/>
    </location>
</feature>
<feature type="helix" evidence="29">
    <location>
        <begin position="294"/>
        <end position="300"/>
    </location>
</feature>
<feature type="turn" evidence="29">
    <location>
        <begin position="303"/>
        <end position="306"/>
    </location>
</feature>
<feature type="turn" evidence="29">
    <location>
        <begin position="309"/>
        <end position="311"/>
    </location>
</feature>
<feature type="strand" evidence="29">
    <location>
        <begin position="314"/>
        <end position="322"/>
    </location>
</feature>
<feature type="helix" evidence="29">
    <location>
        <begin position="327"/>
        <end position="329"/>
    </location>
</feature>
<feature type="strand" evidence="29">
    <location>
        <begin position="331"/>
        <end position="333"/>
    </location>
</feature>
<feature type="helix" evidence="29">
    <location>
        <begin position="335"/>
        <end position="340"/>
    </location>
</feature>
<feature type="helix" evidence="29">
    <location>
        <begin position="347"/>
        <end position="360"/>
    </location>
</feature>
<feature type="turn" evidence="26">
    <location>
        <begin position="363"/>
        <end position="365"/>
    </location>
</feature>
<feature type="helix" evidence="29">
    <location>
        <begin position="375"/>
        <end position="387"/>
    </location>
</feature>
<feature type="strand" evidence="29">
    <location>
        <begin position="390"/>
        <end position="401"/>
    </location>
</feature>
<feature type="strand" evidence="29">
    <location>
        <begin position="407"/>
        <end position="413"/>
    </location>
</feature>
<feature type="helix" evidence="29">
    <location>
        <begin position="418"/>
        <end position="420"/>
    </location>
</feature>
<feature type="strand" evidence="29">
    <location>
        <begin position="422"/>
        <end position="425"/>
    </location>
</feature>
<feature type="helix" evidence="29">
    <location>
        <begin position="426"/>
        <end position="442"/>
    </location>
</feature>
<feature type="helix" evidence="28">
    <location>
        <begin position="1128"/>
        <end position="1138"/>
    </location>
</feature>
<feature type="helix" evidence="28">
    <location>
        <begin position="1144"/>
        <end position="1146"/>
    </location>
</feature>
<feature type="helix" evidence="28">
    <location>
        <begin position="1148"/>
        <end position="1154"/>
    </location>
</feature>
<feature type="helix" evidence="28">
    <location>
        <begin position="1162"/>
        <end position="1180"/>
    </location>
</feature>
<feature type="strand" evidence="28">
    <location>
        <begin position="1201"/>
        <end position="1204"/>
    </location>
</feature>
<feature type="strand" evidence="28">
    <location>
        <begin position="1207"/>
        <end position="1210"/>
    </location>
</feature>
<feature type="helix" evidence="28">
    <location>
        <begin position="1211"/>
        <end position="1227"/>
    </location>
</feature>
<feature type="helix" evidence="28">
    <location>
        <begin position="1232"/>
        <end position="1236"/>
    </location>
</feature>
<feature type="strand" evidence="28">
    <location>
        <begin position="1249"/>
        <end position="1251"/>
    </location>
</feature>
<feature type="helix" evidence="28">
    <location>
        <begin position="1255"/>
        <end position="1268"/>
    </location>
</feature>
<feature type="helix" evidence="28">
    <location>
        <begin position="1273"/>
        <end position="1278"/>
    </location>
</feature>
<feature type="strand" evidence="28">
    <location>
        <begin position="1280"/>
        <end position="1283"/>
    </location>
</feature>
<feature type="turn" evidence="28">
    <location>
        <begin position="1285"/>
        <end position="1287"/>
    </location>
</feature>
<feature type="helix" evidence="28">
    <location>
        <begin position="1299"/>
        <end position="1324"/>
    </location>
</feature>
<feature type="helix" evidence="27">
    <location>
        <begin position="1411"/>
        <end position="1420"/>
    </location>
</feature>
<feature type="helix" evidence="27">
    <location>
        <begin position="1425"/>
        <end position="1432"/>
    </location>
</feature>
<feature type="helix" evidence="27">
    <location>
        <begin position="1440"/>
        <end position="1463"/>
    </location>
</feature>
<feature type="helix" evidence="27">
    <location>
        <begin position="1468"/>
        <end position="1484"/>
    </location>
</feature>
<feature type="strand" evidence="27">
    <location>
        <begin position="1486"/>
        <end position="1488"/>
    </location>
</feature>
<feature type="helix" evidence="27">
    <location>
        <begin position="1490"/>
        <end position="1504"/>
    </location>
</feature>
<feature type="modified residue" description="Phosphoserine" evidence="24">
    <location sequence="O14646-2">
        <position position="1688"/>
    </location>
</feature>
<comment type="function">
    <text evidence="3 12 14">ATP-dependent chromatin-remodeling factor which functions as substrate recognition component of the transcription regulatory histone acetylation (HAT) complex SAGA. Regulates polymerase II transcription. Also required for efficient transcription by RNA polymerase I, and more specifically the polymerase I transcription termination step. Regulates negatively DNA replication. Not only involved in transcription-related chromatin-remodeling, but also required to maintain a specific chromatin configuration across the genome. Is also associated with histone deacetylase (HDAC) activity (By similarity). Required for the bridging of SNF2, the FACT complex, the PAF complex as well as the U2 snRNP complex to H3K4me3. Functions to modulate the efficiency of pre-mRNA splicing in part through physical bridging of spliceosomal components to H3K4me3 (PubMed:18042460, PubMed:28866611). Required for maintaining open chromatin and pluripotency in embryonic stem cells (By similarity).</text>
</comment>
<comment type="catalytic activity">
    <reaction evidence="4">
        <text>ATP + H2O = ADP + phosphate + H(+)</text>
        <dbReference type="Rhea" id="RHEA:13065"/>
        <dbReference type="ChEBI" id="CHEBI:15377"/>
        <dbReference type="ChEBI" id="CHEBI:15378"/>
        <dbReference type="ChEBI" id="CHEBI:30616"/>
        <dbReference type="ChEBI" id="CHEBI:43474"/>
        <dbReference type="ChEBI" id="CHEBI:456216"/>
    </reaction>
</comment>
<comment type="subunit">
    <text evidence="1 9 10 11 12">Component of the SAGA complex (By similarity). Interacts with BCLAF1, NCoR, SRP20 and SAFB (By similarity). Specifically interacts with methylated H3K4me2 and H3K4me3. Interacts with the FACT complex, the PAF complex and the U2 snRNP. Interacts directly with PAF1, SFA3A1, SFA3A2, SFA3A3, SNF2 and SSRP1.</text>
</comment>
<comment type="interaction">
    <interactant intactId="EBI-1560858">
        <id>O14646</id>
    </interactant>
    <interactant intactId="EBI-15599570">
        <id>O60341-1</id>
        <label>KDM1A</label>
    </interactant>
    <organismsDiffer>false</organismsDiffer>
    <experiments>8</experiments>
</comment>
<comment type="interaction">
    <interactant intactId="EBI-1560858">
        <id>O14646</id>
    </interactant>
    <interactant intactId="EBI-4291940">
        <id>B2BUF1</id>
        <label>NS1</label>
    </interactant>
    <organismsDiffer>true</organismsDiffer>
    <experiments>3</experiments>
</comment>
<comment type="interaction">
    <interactant intactId="EBI-10961487">
        <id>O14646-2</id>
    </interactant>
    <interactant intactId="EBI-747754">
        <id>P28799</id>
        <label>GRN</label>
    </interactant>
    <organismsDiffer>false</organismsDiffer>
    <experiments>3</experiments>
</comment>
<comment type="interaction">
    <interactant intactId="EBI-10961487">
        <id>O14646-2</id>
    </interactant>
    <interactant intactId="EBI-720609">
        <id>O76024</id>
        <label>WFS1</label>
    </interactant>
    <organismsDiffer>false</organismsDiffer>
    <experiments>3</experiments>
</comment>
<comment type="subcellular location">
    <subcellularLocation>
        <location evidence="3">Nucleus</location>
    </subcellularLocation>
    <subcellularLocation>
        <location evidence="3">Cytoplasm</location>
    </subcellularLocation>
    <text evidence="3">Is released into the cytoplasm when cells enter mitosis and is reincorporated into chromatin during telophase-cytokinesis.</text>
</comment>
<comment type="alternative products">
    <event type="alternative splicing"/>
    <isoform>
        <id>O14646-1</id>
        <name>1</name>
        <sequence type="displayed"/>
    </isoform>
    <isoform>
        <id>O14646-2</id>
        <name>2</name>
        <sequence type="described" ref="VSP_038432"/>
    </isoform>
</comment>
<comment type="tissue specificity">
    <text evidence="14">Expressed in many tissues including in the brain, where the highest level of expression is found in the cerebellum and basal ganglia.</text>
</comment>
<comment type="domain">
    <text evidence="11">The 2 chromodomains are involved in the binding to the histone H3 methyllysine at position 4 (H3K4me3).</text>
</comment>
<comment type="domain">
    <text evidence="13">The CHD1 helical C-terminal domain (CHCT) binds DNA and nucleosomes.</text>
</comment>
<comment type="disease" evidence="14">
    <disease id="DI-05102">
        <name>Pilarowski-Bjornsson syndrome</name>
        <acronym>PILBOS</acronym>
        <description>An autosomal dominant disorder characterized by developmental delay, speech apraxia, intellectual disability, autism, and facial dysmorphic features. Some patients may have seizures.</description>
        <dbReference type="MIM" id="617682"/>
    </disease>
    <text>The disease is caused by variants affecting the gene represented in this entry.</text>
</comment>
<comment type="similarity">
    <text evidence="17">Belongs to the SNF2/RAD54 helicase family.</text>
</comment>
<keyword id="KW-0002">3D-structure</keyword>
<keyword id="KW-0025">Alternative splicing</keyword>
<keyword id="KW-0067">ATP-binding</keyword>
<keyword id="KW-0156">Chromatin regulator</keyword>
<keyword id="KW-0963">Cytoplasm</keyword>
<keyword id="KW-0225">Disease variant</keyword>
<keyword id="KW-0238">DNA-binding</keyword>
<keyword id="KW-0378">Hydrolase</keyword>
<keyword id="KW-0991">Intellectual disability</keyword>
<keyword id="KW-0547">Nucleotide-binding</keyword>
<keyword id="KW-0539">Nucleus</keyword>
<keyword id="KW-0597">Phosphoprotein</keyword>
<keyword id="KW-1267">Proteomics identification</keyword>
<keyword id="KW-1185">Reference proteome</keyword>
<keyword id="KW-0677">Repeat</keyword>
<keyword id="KW-0804">Transcription</keyword>
<keyword id="KW-0805">Transcription regulation</keyword>
<organism>
    <name type="scientific">Homo sapiens</name>
    <name type="common">Human</name>
    <dbReference type="NCBI Taxonomy" id="9606"/>
    <lineage>
        <taxon>Eukaryota</taxon>
        <taxon>Metazoa</taxon>
        <taxon>Chordata</taxon>
        <taxon>Craniata</taxon>
        <taxon>Vertebrata</taxon>
        <taxon>Euteleostomi</taxon>
        <taxon>Mammalia</taxon>
        <taxon>Eutheria</taxon>
        <taxon>Euarchontoglires</taxon>
        <taxon>Primates</taxon>
        <taxon>Haplorrhini</taxon>
        <taxon>Catarrhini</taxon>
        <taxon>Hominidae</taxon>
        <taxon>Homo</taxon>
    </lineage>
</organism>
<protein>
    <recommendedName>
        <fullName>Chromodomain-helicase-DNA-binding protein 1</fullName>
        <shortName>CHD-1</shortName>
        <ecNumber evidence="4">3.6.4.-</ecNumber>
    </recommendedName>
    <alternativeName>
        <fullName>ATP-dependent helicase CHD1</fullName>
    </alternativeName>
</protein>
<sequence length="1710" mass="196688">MNGHSDEESVRNSSGESSQSDDDSGSASGSGSGSSSGSSSDGSSSQSGSSDSDSGSESGSQSESESDTSRENKVQAKPPKVDGAEFWKSSPSILAVQRSAILKKQQQQQQQQQHQASSNSGSEEDSSSSEDSDDSSSEVKRKKHKDEDWQMSGSGSPSQSGSDSESEEEREKSSCDETESDYEPKNKVKSRKPQNRSKSKNGKKILGQKKRQIDSSEEDDDEEDYDNDKRSSRRQATVNVSYKEDEEMKTDSDDLLEVCGEDVPQPEEEEFETIERFMDCRIGRKGATGATTTIYAVEADGDPNAGFEKNKEPGEIQYLIKWKGWSHIHNTWETEETLKQQNVRGMKKLDNYKKKDQETKRWLKNASPEDVEYYNCQQELTDDLHKQYQIVERIIAHSNQKSAAGYPDYYCKWQGLPYSECSWEDGALISKKFQACIDEYFSRNQSKTTPFKDCKVLKQRPRFVALKKQPSYIGGHEGLELRDYQLNGLNWLAHSWCKGNSCILADEMGLGKTIQTISFLNYLFHEHQLYGPFLLVVPLSTLTSWQREIQTWASQMNAVVYLGDINSRNMIRTHEWTHHQTKRLKFNILLTTYEILLKDKAFLGGLNWAFIGVDEAHRLKNDDSLLYKTLIDFKSNHRLLITGTPLQNSLKELWSLLHFIMPEKFSSWEDFEEEHGKGREYGYASLHKELEPFLLRRVKKDVEKSLPAKVEQILRMEMSALQKQYYKWILTRNYKALSKGSKGSTSGFLNIMMELKKCCNHCYLIKPPDNNEFYNKQEALQHLIRSSGKLILLDKLLIRLRERGNRVLIFSQMVRMLDILAEYLKYRQFPFQRLDGSIKGELRKQALDHFNAEGSEDFCFLLSTRAGGLGINLASADTVVIFDSDWNPQNDLQAQARAHRIGQKKQVNIYRLVTKGSVEEDILERAKKKMVLDHLVIQRMDTTGKTVLHTGSAPSSSTPFNKEELSAILKFGAEELFKEPEGEEQEPQEMDIDEILKRAETHENEPGPLTVGDELLSQFKVANFSNMDEDDIELEPERNSKNWEEIIPEDQRRRLEEEERQKELEEIYMLPRMRNCAKQISFNGSEGRRSRSRRYSGSDSDSISEGKRPKKRGRPRTIPRENIKGFSDAEIRRFIKSYKKFGGPLERLDAIARDAELVDKSETDLRRLGELVHNGCIKALKDSSSGTERTGGRLGKVKGPTFRISGVQVNAKLVISHEEELIPLHKSIPSDPEERKQYTIPCHTKAAHFDIDWGKEDDSNLLIGIYEYGYGSWEMIKMDPDLSLTHKILPDDPDKKPQAKQLQTRADYLIKLLSRDLAKKEALSGAGSSKRRKARAKKNKAMKSIKVKEEIKSDSSPLPSEKSDEDDDKLSESKSDGRERSKKSSVSDAPVHITASGEPVPISEESEELDQKTFSICKERMRPVKAALKQLDRPEKGLSEREQLEHTRQCLIKIGDHITECLKEYTNPEQIKQWRKNLWIFVSKFTEFDARKLHKLYKHAIKKRQESQQNSDQNSNLNPHVIRNPDVERLKENTNHDDSSRDSYSSDRHLTQYHDHHKDRHQGDSYKKSDSRKRPYSSFSNGKDHRDWDHYKQDSRYYSDREKHRKLDDHRSRDHRSNLEGSLKDRSHSDHRSHSDHRLHSDHRSSSEYTHHKSSRDYRYHSDWQMDHRASSSGPRSPLDQRSPYGSRSPFEHSVEHKSTPEHTWSSRKT</sequence>
<proteinExistence type="evidence at protein level"/>
<name>CHD1_HUMAN</name>